<gene>
    <name evidence="1" type="primary">rbfA</name>
    <name type="ordered locus">MYCGA1160</name>
    <name type="ORF">MGA_0824</name>
</gene>
<dbReference type="EMBL" id="AE015450">
    <property type="protein sequence ID" value="AAP56466.2"/>
    <property type="molecule type" value="Genomic_DNA"/>
</dbReference>
<dbReference type="RefSeq" id="WP_011113344.1">
    <property type="nucleotide sequence ID" value="NC_004829.2"/>
</dbReference>
<dbReference type="SMR" id="Q7NBZ3"/>
<dbReference type="GeneID" id="93509931"/>
<dbReference type="KEGG" id="mga:MGA_0824"/>
<dbReference type="PATRIC" id="fig|233150.7.peg.126"/>
<dbReference type="HOGENOM" id="CLU_089475_3_2_14"/>
<dbReference type="OrthoDB" id="398336at2"/>
<dbReference type="Proteomes" id="UP000001418">
    <property type="component" value="Chromosome"/>
</dbReference>
<dbReference type="GO" id="GO:0005829">
    <property type="term" value="C:cytosol"/>
    <property type="evidence" value="ECO:0007669"/>
    <property type="project" value="TreeGrafter"/>
</dbReference>
<dbReference type="GO" id="GO:0043024">
    <property type="term" value="F:ribosomal small subunit binding"/>
    <property type="evidence" value="ECO:0007669"/>
    <property type="project" value="TreeGrafter"/>
</dbReference>
<dbReference type="GO" id="GO:0030490">
    <property type="term" value="P:maturation of SSU-rRNA"/>
    <property type="evidence" value="ECO:0007669"/>
    <property type="project" value="UniProtKB-UniRule"/>
</dbReference>
<dbReference type="Gene3D" id="3.30.300.20">
    <property type="match status" value="1"/>
</dbReference>
<dbReference type="HAMAP" id="MF_00003">
    <property type="entry name" value="RbfA"/>
    <property type="match status" value="1"/>
</dbReference>
<dbReference type="InterPro" id="IPR015946">
    <property type="entry name" value="KH_dom-like_a/b"/>
</dbReference>
<dbReference type="InterPro" id="IPR000238">
    <property type="entry name" value="RbfA"/>
</dbReference>
<dbReference type="InterPro" id="IPR023799">
    <property type="entry name" value="RbfA_dom_sf"/>
</dbReference>
<dbReference type="InterPro" id="IPR020053">
    <property type="entry name" value="Ribosome-bd_factorA_CS"/>
</dbReference>
<dbReference type="NCBIfam" id="TIGR00082">
    <property type="entry name" value="rbfA"/>
    <property type="match status" value="1"/>
</dbReference>
<dbReference type="PANTHER" id="PTHR33515">
    <property type="entry name" value="RIBOSOME-BINDING FACTOR A, CHLOROPLASTIC-RELATED"/>
    <property type="match status" value="1"/>
</dbReference>
<dbReference type="PANTHER" id="PTHR33515:SF1">
    <property type="entry name" value="RIBOSOME-BINDING FACTOR A, CHLOROPLASTIC-RELATED"/>
    <property type="match status" value="1"/>
</dbReference>
<dbReference type="Pfam" id="PF02033">
    <property type="entry name" value="RBFA"/>
    <property type="match status" value="1"/>
</dbReference>
<dbReference type="SUPFAM" id="SSF89919">
    <property type="entry name" value="Ribosome-binding factor A, RbfA"/>
    <property type="match status" value="1"/>
</dbReference>
<dbReference type="PROSITE" id="PS01319">
    <property type="entry name" value="RBFA"/>
    <property type="match status" value="1"/>
</dbReference>
<reference key="1">
    <citation type="journal article" date="2003" name="Microbiology">
        <title>The complete genome sequence of the avian pathogen Mycoplasma gallisepticum strain R(low).</title>
        <authorList>
            <person name="Papazisi L."/>
            <person name="Gorton T.S."/>
            <person name="Kutish G."/>
            <person name="Markham P.F."/>
            <person name="Browning G.F."/>
            <person name="Nguyen D.K."/>
            <person name="Swartzell S."/>
            <person name="Madan A."/>
            <person name="Mahairas G."/>
            <person name="Geary S.J."/>
        </authorList>
    </citation>
    <scope>NUCLEOTIDE SEQUENCE [LARGE SCALE GENOMIC DNA]</scope>
    <source>
        <strain>R(low / passage 15 / clone 2)</strain>
    </source>
</reference>
<sequence>MSKIKTLRLEATIHKLLSQAISTEINNSLIKTSVITAIKLSDDKSVAKIYIDCLIPNNIAKTLQAYKDATGVFRHVLSKHLTIRRIPQLVFYYDDSISKGAKIDQILAEIKQEKKENHE</sequence>
<evidence type="ECO:0000255" key="1">
    <source>
        <dbReference type="HAMAP-Rule" id="MF_00003"/>
    </source>
</evidence>
<comment type="function">
    <text evidence="1">One of several proteins that assist in the late maturation steps of the functional core of the 30S ribosomal subunit. Associates with free 30S ribosomal subunits (but not with 30S subunits that are part of 70S ribosomes or polysomes). Required for efficient processing of 16S rRNA. May interact with the 5'-terminal helix region of 16S rRNA.</text>
</comment>
<comment type="subunit">
    <text evidence="1">Monomer. Binds 30S ribosomal subunits, but not 50S ribosomal subunits or 70S ribosomes.</text>
</comment>
<comment type="subcellular location">
    <subcellularLocation>
        <location evidence="1">Cytoplasm</location>
    </subcellularLocation>
</comment>
<comment type="similarity">
    <text evidence="1">Belongs to the RbfA family.</text>
</comment>
<feature type="chain" id="PRO_0000102691" description="Ribosome-binding factor A">
    <location>
        <begin position="1"/>
        <end position="119"/>
    </location>
</feature>
<protein>
    <recommendedName>
        <fullName evidence="1">Ribosome-binding factor A</fullName>
    </recommendedName>
</protein>
<name>RBFA_MYCGA</name>
<proteinExistence type="inferred from homology"/>
<accession>Q7NBZ3</accession>
<organism>
    <name type="scientific">Mycoplasmoides gallisepticum (strain R(low / passage 15 / clone 2))</name>
    <name type="common">Mycoplasma gallisepticum</name>
    <dbReference type="NCBI Taxonomy" id="710127"/>
    <lineage>
        <taxon>Bacteria</taxon>
        <taxon>Bacillati</taxon>
        <taxon>Mycoplasmatota</taxon>
        <taxon>Mycoplasmoidales</taxon>
        <taxon>Mycoplasmoidaceae</taxon>
        <taxon>Mycoplasmoides</taxon>
    </lineage>
</organism>
<keyword id="KW-0963">Cytoplasm</keyword>
<keyword id="KW-1185">Reference proteome</keyword>
<keyword id="KW-0690">Ribosome biogenesis</keyword>